<dbReference type="EC" id="2.7.7.23" evidence="1"/>
<dbReference type="EC" id="2.3.1.157" evidence="1"/>
<dbReference type="EMBL" id="CP000672">
    <property type="protein sequence ID" value="ABR00189.1"/>
    <property type="molecule type" value="Genomic_DNA"/>
</dbReference>
<dbReference type="SMR" id="A5UHD3"/>
<dbReference type="KEGG" id="hiq:CGSHiGG_06470"/>
<dbReference type="HOGENOM" id="CLU_029499_15_2_6"/>
<dbReference type="UniPathway" id="UPA00113">
    <property type="reaction ID" value="UER00532"/>
</dbReference>
<dbReference type="UniPathway" id="UPA00113">
    <property type="reaction ID" value="UER00533"/>
</dbReference>
<dbReference type="UniPathway" id="UPA00973"/>
<dbReference type="Proteomes" id="UP000001990">
    <property type="component" value="Chromosome"/>
</dbReference>
<dbReference type="GO" id="GO:0005737">
    <property type="term" value="C:cytoplasm"/>
    <property type="evidence" value="ECO:0007669"/>
    <property type="project" value="UniProtKB-SubCell"/>
</dbReference>
<dbReference type="GO" id="GO:0016020">
    <property type="term" value="C:membrane"/>
    <property type="evidence" value="ECO:0007669"/>
    <property type="project" value="GOC"/>
</dbReference>
<dbReference type="GO" id="GO:0019134">
    <property type="term" value="F:glucosamine-1-phosphate N-acetyltransferase activity"/>
    <property type="evidence" value="ECO:0007669"/>
    <property type="project" value="UniProtKB-UniRule"/>
</dbReference>
<dbReference type="GO" id="GO:0000287">
    <property type="term" value="F:magnesium ion binding"/>
    <property type="evidence" value="ECO:0007669"/>
    <property type="project" value="UniProtKB-UniRule"/>
</dbReference>
<dbReference type="GO" id="GO:0003977">
    <property type="term" value="F:UDP-N-acetylglucosamine diphosphorylase activity"/>
    <property type="evidence" value="ECO:0007669"/>
    <property type="project" value="UniProtKB-UniRule"/>
</dbReference>
<dbReference type="GO" id="GO:0000902">
    <property type="term" value="P:cell morphogenesis"/>
    <property type="evidence" value="ECO:0007669"/>
    <property type="project" value="UniProtKB-UniRule"/>
</dbReference>
<dbReference type="GO" id="GO:0071555">
    <property type="term" value="P:cell wall organization"/>
    <property type="evidence" value="ECO:0007669"/>
    <property type="project" value="UniProtKB-KW"/>
</dbReference>
<dbReference type="GO" id="GO:0009245">
    <property type="term" value="P:lipid A biosynthetic process"/>
    <property type="evidence" value="ECO:0007669"/>
    <property type="project" value="UniProtKB-UniRule"/>
</dbReference>
<dbReference type="GO" id="GO:0009252">
    <property type="term" value="P:peptidoglycan biosynthetic process"/>
    <property type="evidence" value="ECO:0007669"/>
    <property type="project" value="UniProtKB-UniRule"/>
</dbReference>
<dbReference type="GO" id="GO:0008360">
    <property type="term" value="P:regulation of cell shape"/>
    <property type="evidence" value="ECO:0007669"/>
    <property type="project" value="UniProtKB-KW"/>
</dbReference>
<dbReference type="GO" id="GO:0006048">
    <property type="term" value="P:UDP-N-acetylglucosamine biosynthetic process"/>
    <property type="evidence" value="ECO:0007669"/>
    <property type="project" value="UniProtKB-UniPathway"/>
</dbReference>
<dbReference type="CDD" id="cd02540">
    <property type="entry name" value="GT2_GlmU_N_bac"/>
    <property type="match status" value="1"/>
</dbReference>
<dbReference type="CDD" id="cd03353">
    <property type="entry name" value="LbH_GlmU_C"/>
    <property type="match status" value="1"/>
</dbReference>
<dbReference type="FunFam" id="3.90.550.10:FF:000006">
    <property type="entry name" value="Bifunctional protein GlmU"/>
    <property type="match status" value="1"/>
</dbReference>
<dbReference type="Gene3D" id="2.160.10.10">
    <property type="entry name" value="Hexapeptide repeat proteins"/>
    <property type="match status" value="1"/>
</dbReference>
<dbReference type="Gene3D" id="3.90.550.10">
    <property type="entry name" value="Spore Coat Polysaccharide Biosynthesis Protein SpsA, Chain A"/>
    <property type="match status" value="1"/>
</dbReference>
<dbReference type="HAMAP" id="MF_01631">
    <property type="entry name" value="GlmU"/>
    <property type="match status" value="1"/>
</dbReference>
<dbReference type="InterPro" id="IPR005882">
    <property type="entry name" value="Bifunctional_GlmU"/>
</dbReference>
<dbReference type="InterPro" id="IPR050065">
    <property type="entry name" value="GlmU-like"/>
</dbReference>
<dbReference type="InterPro" id="IPR038009">
    <property type="entry name" value="GlmU_C_LbH"/>
</dbReference>
<dbReference type="InterPro" id="IPR001451">
    <property type="entry name" value="Hexapep"/>
</dbReference>
<dbReference type="InterPro" id="IPR018357">
    <property type="entry name" value="Hexapep_transf_CS"/>
</dbReference>
<dbReference type="InterPro" id="IPR025877">
    <property type="entry name" value="MobA-like_NTP_Trfase"/>
</dbReference>
<dbReference type="InterPro" id="IPR029044">
    <property type="entry name" value="Nucleotide-diphossugar_trans"/>
</dbReference>
<dbReference type="InterPro" id="IPR011004">
    <property type="entry name" value="Trimer_LpxA-like_sf"/>
</dbReference>
<dbReference type="NCBIfam" id="TIGR01173">
    <property type="entry name" value="glmU"/>
    <property type="match status" value="1"/>
</dbReference>
<dbReference type="NCBIfam" id="NF006986">
    <property type="entry name" value="PRK09451.1"/>
    <property type="match status" value="1"/>
</dbReference>
<dbReference type="PANTHER" id="PTHR43584:SF3">
    <property type="entry name" value="BIFUNCTIONAL PROTEIN GLMU"/>
    <property type="match status" value="1"/>
</dbReference>
<dbReference type="PANTHER" id="PTHR43584">
    <property type="entry name" value="NUCLEOTIDYL TRANSFERASE"/>
    <property type="match status" value="1"/>
</dbReference>
<dbReference type="Pfam" id="PF00132">
    <property type="entry name" value="Hexapep"/>
    <property type="match status" value="2"/>
</dbReference>
<dbReference type="Pfam" id="PF12804">
    <property type="entry name" value="NTP_transf_3"/>
    <property type="match status" value="1"/>
</dbReference>
<dbReference type="SUPFAM" id="SSF53448">
    <property type="entry name" value="Nucleotide-diphospho-sugar transferases"/>
    <property type="match status" value="1"/>
</dbReference>
<dbReference type="SUPFAM" id="SSF51161">
    <property type="entry name" value="Trimeric LpxA-like enzymes"/>
    <property type="match status" value="1"/>
</dbReference>
<dbReference type="PROSITE" id="PS00101">
    <property type="entry name" value="HEXAPEP_TRANSFERASES"/>
    <property type="match status" value="1"/>
</dbReference>
<feature type="chain" id="PRO_1000056161" description="Bifunctional protein GlmU">
    <location>
        <begin position="1"/>
        <end position="456"/>
    </location>
</feature>
<feature type="region of interest" description="Pyrophosphorylase" evidence="1">
    <location>
        <begin position="1"/>
        <end position="229"/>
    </location>
</feature>
<feature type="region of interest" description="Linker" evidence="1">
    <location>
        <begin position="230"/>
        <end position="250"/>
    </location>
</feature>
<feature type="region of interest" description="N-acetyltransferase" evidence="1">
    <location>
        <begin position="251"/>
        <end position="456"/>
    </location>
</feature>
<feature type="active site" description="Proton acceptor" evidence="1">
    <location>
        <position position="363"/>
    </location>
</feature>
<feature type="binding site" evidence="1">
    <location>
        <begin position="11"/>
        <end position="14"/>
    </location>
    <ligand>
        <name>UDP-N-acetyl-alpha-D-glucosamine</name>
        <dbReference type="ChEBI" id="CHEBI:57705"/>
    </ligand>
</feature>
<feature type="binding site" evidence="1">
    <location>
        <position position="25"/>
    </location>
    <ligand>
        <name>UDP-N-acetyl-alpha-D-glucosamine</name>
        <dbReference type="ChEBI" id="CHEBI:57705"/>
    </ligand>
</feature>
<feature type="binding site" evidence="1">
    <location>
        <position position="76"/>
    </location>
    <ligand>
        <name>UDP-N-acetyl-alpha-D-glucosamine</name>
        <dbReference type="ChEBI" id="CHEBI:57705"/>
    </ligand>
</feature>
<feature type="binding site" evidence="1">
    <location>
        <begin position="81"/>
        <end position="82"/>
    </location>
    <ligand>
        <name>UDP-N-acetyl-alpha-D-glucosamine</name>
        <dbReference type="ChEBI" id="CHEBI:57705"/>
    </ligand>
</feature>
<feature type="binding site" evidence="1">
    <location>
        <begin position="103"/>
        <end position="105"/>
    </location>
    <ligand>
        <name>UDP-N-acetyl-alpha-D-glucosamine</name>
        <dbReference type="ChEBI" id="CHEBI:57705"/>
    </ligand>
</feature>
<feature type="binding site" evidence="1">
    <location>
        <position position="105"/>
    </location>
    <ligand>
        <name>Mg(2+)</name>
        <dbReference type="ChEBI" id="CHEBI:18420"/>
    </ligand>
</feature>
<feature type="binding site" evidence="1">
    <location>
        <position position="140"/>
    </location>
    <ligand>
        <name>UDP-N-acetyl-alpha-D-glucosamine</name>
        <dbReference type="ChEBI" id="CHEBI:57705"/>
    </ligand>
</feature>
<feature type="binding site" evidence="1">
    <location>
        <position position="154"/>
    </location>
    <ligand>
        <name>UDP-N-acetyl-alpha-D-glucosamine</name>
        <dbReference type="ChEBI" id="CHEBI:57705"/>
    </ligand>
</feature>
<feature type="binding site" evidence="1">
    <location>
        <position position="169"/>
    </location>
    <ligand>
        <name>UDP-N-acetyl-alpha-D-glucosamine</name>
        <dbReference type="ChEBI" id="CHEBI:57705"/>
    </ligand>
</feature>
<feature type="binding site" evidence="1">
    <location>
        <position position="227"/>
    </location>
    <ligand>
        <name>Mg(2+)</name>
        <dbReference type="ChEBI" id="CHEBI:18420"/>
    </ligand>
</feature>
<feature type="binding site" evidence="1">
    <location>
        <position position="227"/>
    </location>
    <ligand>
        <name>UDP-N-acetyl-alpha-D-glucosamine</name>
        <dbReference type="ChEBI" id="CHEBI:57705"/>
    </ligand>
</feature>
<feature type="binding site" evidence="1">
    <location>
        <position position="333"/>
    </location>
    <ligand>
        <name>UDP-N-acetyl-alpha-D-glucosamine</name>
        <dbReference type="ChEBI" id="CHEBI:57705"/>
    </ligand>
</feature>
<feature type="binding site" evidence="1">
    <location>
        <position position="351"/>
    </location>
    <ligand>
        <name>UDP-N-acetyl-alpha-D-glucosamine</name>
        <dbReference type="ChEBI" id="CHEBI:57705"/>
    </ligand>
</feature>
<feature type="binding site" evidence="1">
    <location>
        <position position="366"/>
    </location>
    <ligand>
        <name>UDP-N-acetyl-alpha-D-glucosamine</name>
        <dbReference type="ChEBI" id="CHEBI:57705"/>
    </ligand>
</feature>
<feature type="binding site" evidence="1">
    <location>
        <position position="377"/>
    </location>
    <ligand>
        <name>UDP-N-acetyl-alpha-D-glucosamine</name>
        <dbReference type="ChEBI" id="CHEBI:57705"/>
    </ligand>
</feature>
<feature type="binding site" evidence="1">
    <location>
        <position position="380"/>
    </location>
    <ligand>
        <name>acetyl-CoA</name>
        <dbReference type="ChEBI" id="CHEBI:57288"/>
    </ligand>
</feature>
<feature type="binding site" evidence="1">
    <location>
        <begin position="386"/>
        <end position="387"/>
    </location>
    <ligand>
        <name>acetyl-CoA</name>
        <dbReference type="ChEBI" id="CHEBI:57288"/>
    </ligand>
</feature>
<feature type="binding site" evidence="1">
    <location>
        <position position="405"/>
    </location>
    <ligand>
        <name>acetyl-CoA</name>
        <dbReference type="ChEBI" id="CHEBI:57288"/>
    </ligand>
</feature>
<feature type="binding site" evidence="1">
    <location>
        <position position="423"/>
    </location>
    <ligand>
        <name>acetyl-CoA</name>
        <dbReference type="ChEBI" id="CHEBI:57288"/>
    </ligand>
</feature>
<feature type="binding site" evidence="1">
    <location>
        <position position="440"/>
    </location>
    <ligand>
        <name>acetyl-CoA</name>
        <dbReference type="ChEBI" id="CHEBI:57288"/>
    </ligand>
</feature>
<protein>
    <recommendedName>
        <fullName evidence="1">Bifunctional protein GlmU</fullName>
    </recommendedName>
    <domain>
        <recommendedName>
            <fullName evidence="1">UDP-N-acetylglucosamine pyrophosphorylase</fullName>
            <ecNumber evidence="1">2.7.7.23</ecNumber>
        </recommendedName>
        <alternativeName>
            <fullName evidence="1">N-acetylglucosamine-1-phosphate uridyltransferase</fullName>
        </alternativeName>
    </domain>
    <domain>
        <recommendedName>
            <fullName evidence="1">Glucosamine-1-phosphate N-acetyltransferase</fullName>
            <ecNumber evidence="1">2.3.1.157</ecNumber>
        </recommendedName>
    </domain>
</protein>
<accession>A5UHD3</accession>
<proteinExistence type="inferred from homology"/>
<name>GLMU_HAEIG</name>
<evidence type="ECO:0000255" key="1">
    <source>
        <dbReference type="HAMAP-Rule" id="MF_01631"/>
    </source>
</evidence>
<organism>
    <name type="scientific">Haemophilus influenzae (strain PittGG)</name>
    <dbReference type="NCBI Taxonomy" id="374931"/>
    <lineage>
        <taxon>Bacteria</taxon>
        <taxon>Pseudomonadati</taxon>
        <taxon>Pseudomonadota</taxon>
        <taxon>Gammaproteobacteria</taxon>
        <taxon>Pasteurellales</taxon>
        <taxon>Pasteurellaceae</taxon>
        <taxon>Haemophilus</taxon>
    </lineage>
</organism>
<sequence length="456" mass="49181">MTKKALSAVILAAGKGTRMYSDLPKVLHTIAGKPMVKHVIDTAHQLGAENIHLIYGHGGDLMRSHLANEQVNWVLQTEQLGTAHAVQQSAPFFKDNENIVVLYGDAPLITKETLEKLIEAKPENGIALLTVNLDNPTGYGRIIRENGNVVAIVEQKDANADQLNIKEVNTGVMVSDGASFKKWLARVGNNNAQGEYYLTDLIALANQDNCQVVAVQATDVMEVEGANNRLQLAALERYLQNKQASKLLLEGVMIYDPARFDLRGTLEHGKDVEIDVNVIIEGNVKLGDRVKIGAGCVLKNVVIGNDVEIKPYSVLEDSVVGEKAAIGPFSRLRPGAELAAETHVGNFVEIKKSTVGKGSKVNHLTYVGDSEIGSNCNIGAGVITCNYDGANKFKTIIGDDVFVGSDTQLVAPVKVANGATIGAGTTITRDVGENELVITRVAQRHIQGWQRPIKKK</sequence>
<reference key="1">
    <citation type="journal article" date="2007" name="Genome Biol.">
        <title>Characterization and modeling of the Haemophilus influenzae core and supragenomes based on the complete genomic sequences of Rd and 12 clinical nontypeable strains.</title>
        <authorList>
            <person name="Hogg J.S."/>
            <person name="Hu F.Z."/>
            <person name="Janto B."/>
            <person name="Boissy R."/>
            <person name="Hayes J."/>
            <person name="Keefe R."/>
            <person name="Post J.C."/>
            <person name="Ehrlich G.D."/>
        </authorList>
    </citation>
    <scope>NUCLEOTIDE SEQUENCE [LARGE SCALE GENOMIC DNA]</scope>
    <source>
        <strain>PittGG</strain>
    </source>
</reference>
<keyword id="KW-0012">Acyltransferase</keyword>
<keyword id="KW-0133">Cell shape</keyword>
<keyword id="KW-0961">Cell wall biogenesis/degradation</keyword>
<keyword id="KW-0963">Cytoplasm</keyword>
<keyword id="KW-0460">Magnesium</keyword>
<keyword id="KW-0479">Metal-binding</keyword>
<keyword id="KW-0511">Multifunctional enzyme</keyword>
<keyword id="KW-0548">Nucleotidyltransferase</keyword>
<keyword id="KW-0573">Peptidoglycan synthesis</keyword>
<keyword id="KW-0677">Repeat</keyword>
<keyword id="KW-0808">Transferase</keyword>
<comment type="function">
    <text evidence="1">Catalyzes the last two sequential reactions in the de novo biosynthetic pathway for UDP-N-acetylglucosamine (UDP-GlcNAc). The C-terminal domain catalyzes the transfer of acetyl group from acetyl coenzyme A to glucosamine-1-phosphate (GlcN-1-P) to produce N-acetylglucosamine-1-phosphate (GlcNAc-1-P), which is converted into UDP-GlcNAc by the transfer of uridine 5-monophosphate (from uridine 5-triphosphate), a reaction catalyzed by the N-terminal domain.</text>
</comment>
<comment type="catalytic activity">
    <reaction evidence="1">
        <text>alpha-D-glucosamine 1-phosphate + acetyl-CoA = N-acetyl-alpha-D-glucosamine 1-phosphate + CoA + H(+)</text>
        <dbReference type="Rhea" id="RHEA:13725"/>
        <dbReference type="ChEBI" id="CHEBI:15378"/>
        <dbReference type="ChEBI" id="CHEBI:57287"/>
        <dbReference type="ChEBI" id="CHEBI:57288"/>
        <dbReference type="ChEBI" id="CHEBI:57776"/>
        <dbReference type="ChEBI" id="CHEBI:58516"/>
        <dbReference type="EC" id="2.3.1.157"/>
    </reaction>
</comment>
<comment type="catalytic activity">
    <reaction evidence="1">
        <text>N-acetyl-alpha-D-glucosamine 1-phosphate + UTP + H(+) = UDP-N-acetyl-alpha-D-glucosamine + diphosphate</text>
        <dbReference type="Rhea" id="RHEA:13509"/>
        <dbReference type="ChEBI" id="CHEBI:15378"/>
        <dbReference type="ChEBI" id="CHEBI:33019"/>
        <dbReference type="ChEBI" id="CHEBI:46398"/>
        <dbReference type="ChEBI" id="CHEBI:57705"/>
        <dbReference type="ChEBI" id="CHEBI:57776"/>
        <dbReference type="EC" id="2.7.7.23"/>
    </reaction>
</comment>
<comment type="cofactor">
    <cofactor evidence="1">
        <name>Mg(2+)</name>
        <dbReference type="ChEBI" id="CHEBI:18420"/>
    </cofactor>
    <text evidence="1">Binds 1 Mg(2+) ion per subunit.</text>
</comment>
<comment type="pathway">
    <text evidence="1">Nucleotide-sugar biosynthesis; UDP-N-acetyl-alpha-D-glucosamine biosynthesis; N-acetyl-alpha-D-glucosamine 1-phosphate from alpha-D-glucosamine 6-phosphate (route II): step 2/2.</text>
</comment>
<comment type="pathway">
    <text evidence="1">Nucleotide-sugar biosynthesis; UDP-N-acetyl-alpha-D-glucosamine biosynthesis; UDP-N-acetyl-alpha-D-glucosamine from N-acetyl-alpha-D-glucosamine 1-phosphate: step 1/1.</text>
</comment>
<comment type="pathway">
    <text evidence="1">Bacterial outer membrane biogenesis; LPS lipid A biosynthesis.</text>
</comment>
<comment type="subunit">
    <text evidence="1">Homotrimer.</text>
</comment>
<comment type="subcellular location">
    <subcellularLocation>
        <location evidence="1">Cytoplasm</location>
    </subcellularLocation>
</comment>
<comment type="similarity">
    <text evidence="1">In the N-terminal section; belongs to the N-acetylglucosamine-1-phosphate uridyltransferase family.</text>
</comment>
<comment type="similarity">
    <text evidence="1">In the C-terminal section; belongs to the transferase hexapeptide repeat family.</text>
</comment>
<gene>
    <name evidence="1" type="primary">glmU</name>
    <name type="ordered locus">CGSHiGG_06470</name>
</gene>